<dbReference type="EC" id="1.2.1.70" evidence="1"/>
<dbReference type="EMBL" id="CP000816">
    <property type="protein sequence ID" value="ABU81695.1"/>
    <property type="molecule type" value="Genomic_DNA"/>
</dbReference>
<dbReference type="RefSeq" id="WP_011998547.1">
    <property type="nucleotide sequence ID" value="NC_009776.1"/>
</dbReference>
<dbReference type="SMR" id="A8A9U3"/>
<dbReference type="STRING" id="453591.Igni_0512"/>
<dbReference type="GeneID" id="5562776"/>
<dbReference type="KEGG" id="iho:Igni_0512"/>
<dbReference type="eggNOG" id="arCOG01036">
    <property type="taxonomic scope" value="Archaea"/>
</dbReference>
<dbReference type="HOGENOM" id="CLU_035113_0_0_2"/>
<dbReference type="OrthoDB" id="4562at2157"/>
<dbReference type="PhylomeDB" id="A8A9U3"/>
<dbReference type="UniPathway" id="UPA00251">
    <property type="reaction ID" value="UER00316"/>
</dbReference>
<dbReference type="Proteomes" id="UP000000262">
    <property type="component" value="Chromosome"/>
</dbReference>
<dbReference type="GO" id="GO:0008883">
    <property type="term" value="F:glutamyl-tRNA reductase activity"/>
    <property type="evidence" value="ECO:0007669"/>
    <property type="project" value="UniProtKB-UniRule"/>
</dbReference>
<dbReference type="GO" id="GO:0050661">
    <property type="term" value="F:NADP binding"/>
    <property type="evidence" value="ECO:0007669"/>
    <property type="project" value="InterPro"/>
</dbReference>
<dbReference type="GO" id="GO:0019353">
    <property type="term" value="P:protoporphyrinogen IX biosynthetic process from glutamate"/>
    <property type="evidence" value="ECO:0007669"/>
    <property type="project" value="TreeGrafter"/>
</dbReference>
<dbReference type="CDD" id="cd05213">
    <property type="entry name" value="NAD_bind_Glutamyl_tRNA_reduct"/>
    <property type="match status" value="1"/>
</dbReference>
<dbReference type="FunFam" id="3.30.460.30:FF:000001">
    <property type="entry name" value="Glutamyl-tRNA reductase"/>
    <property type="match status" value="1"/>
</dbReference>
<dbReference type="Gene3D" id="3.30.460.30">
    <property type="entry name" value="Glutamyl-tRNA reductase, N-terminal domain"/>
    <property type="match status" value="1"/>
</dbReference>
<dbReference type="Gene3D" id="3.40.50.720">
    <property type="entry name" value="NAD(P)-binding Rossmann-like Domain"/>
    <property type="match status" value="1"/>
</dbReference>
<dbReference type="HAMAP" id="MF_00087">
    <property type="entry name" value="Glu_tRNA_reductase"/>
    <property type="match status" value="1"/>
</dbReference>
<dbReference type="InterPro" id="IPR000343">
    <property type="entry name" value="4pyrrol_synth_GluRdtase"/>
</dbReference>
<dbReference type="InterPro" id="IPR015896">
    <property type="entry name" value="4pyrrol_synth_GluRdtase_dimer"/>
</dbReference>
<dbReference type="InterPro" id="IPR015895">
    <property type="entry name" value="4pyrrol_synth_GluRdtase_N"/>
</dbReference>
<dbReference type="InterPro" id="IPR018214">
    <property type="entry name" value="GluRdtase_CS"/>
</dbReference>
<dbReference type="InterPro" id="IPR036453">
    <property type="entry name" value="GluRdtase_dimer_dom_sf"/>
</dbReference>
<dbReference type="InterPro" id="IPR036343">
    <property type="entry name" value="GluRdtase_N_sf"/>
</dbReference>
<dbReference type="InterPro" id="IPR036291">
    <property type="entry name" value="NAD(P)-bd_dom_sf"/>
</dbReference>
<dbReference type="InterPro" id="IPR006151">
    <property type="entry name" value="Shikm_DH/Glu-tRNA_Rdtase"/>
</dbReference>
<dbReference type="NCBIfam" id="TIGR01035">
    <property type="entry name" value="hemA"/>
    <property type="match status" value="1"/>
</dbReference>
<dbReference type="PANTHER" id="PTHR43013">
    <property type="entry name" value="GLUTAMYL-TRNA REDUCTASE"/>
    <property type="match status" value="1"/>
</dbReference>
<dbReference type="PANTHER" id="PTHR43013:SF1">
    <property type="entry name" value="GLUTAMYL-TRNA REDUCTASE"/>
    <property type="match status" value="1"/>
</dbReference>
<dbReference type="Pfam" id="PF00745">
    <property type="entry name" value="GlutR_dimer"/>
    <property type="match status" value="1"/>
</dbReference>
<dbReference type="Pfam" id="PF05201">
    <property type="entry name" value="GlutR_N"/>
    <property type="match status" value="1"/>
</dbReference>
<dbReference type="Pfam" id="PF01488">
    <property type="entry name" value="Shikimate_DH"/>
    <property type="match status" value="1"/>
</dbReference>
<dbReference type="PIRSF" id="PIRSF000445">
    <property type="entry name" value="4pyrrol_synth_GluRdtase"/>
    <property type="match status" value="1"/>
</dbReference>
<dbReference type="SUPFAM" id="SSF69742">
    <property type="entry name" value="Glutamyl tRNA-reductase catalytic, N-terminal domain"/>
    <property type="match status" value="1"/>
</dbReference>
<dbReference type="SUPFAM" id="SSF69075">
    <property type="entry name" value="Glutamyl tRNA-reductase dimerization domain"/>
    <property type="match status" value="1"/>
</dbReference>
<dbReference type="SUPFAM" id="SSF51735">
    <property type="entry name" value="NAD(P)-binding Rossmann-fold domains"/>
    <property type="match status" value="1"/>
</dbReference>
<dbReference type="PROSITE" id="PS00747">
    <property type="entry name" value="GLUTR"/>
    <property type="match status" value="1"/>
</dbReference>
<protein>
    <recommendedName>
        <fullName evidence="1">Glutamyl-tRNA reductase</fullName>
        <shortName evidence="1">GluTR</shortName>
        <ecNumber evidence="1">1.2.1.70</ecNumber>
    </recommendedName>
</protein>
<comment type="function">
    <text evidence="1">Catalyzes the NADPH-dependent reduction of glutamyl-tRNA(Glu) to glutamate 1-semialdehyde (GSA).</text>
</comment>
<comment type="catalytic activity">
    <reaction evidence="1">
        <text>(S)-4-amino-5-oxopentanoate + tRNA(Glu) + NADP(+) = L-glutamyl-tRNA(Glu) + NADPH + H(+)</text>
        <dbReference type="Rhea" id="RHEA:12344"/>
        <dbReference type="Rhea" id="RHEA-COMP:9663"/>
        <dbReference type="Rhea" id="RHEA-COMP:9680"/>
        <dbReference type="ChEBI" id="CHEBI:15378"/>
        <dbReference type="ChEBI" id="CHEBI:57501"/>
        <dbReference type="ChEBI" id="CHEBI:57783"/>
        <dbReference type="ChEBI" id="CHEBI:58349"/>
        <dbReference type="ChEBI" id="CHEBI:78442"/>
        <dbReference type="ChEBI" id="CHEBI:78520"/>
        <dbReference type="EC" id="1.2.1.70"/>
    </reaction>
</comment>
<comment type="pathway">
    <text evidence="1">Porphyrin-containing compound metabolism; protoporphyrin-IX biosynthesis; 5-aminolevulinate from L-glutamyl-tRNA(Glu): step 1/2.</text>
</comment>
<comment type="subunit">
    <text evidence="1">Homodimer.</text>
</comment>
<comment type="domain">
    <text evidence="1">Possesses an unusual extended V-shaped dimeric structure with each monomer consisting of three distinct domains arranged along a curved 'spinal' alpha-helix. The N-terminal catalytic domain specifically recognizes the glutamate moiety of the substrate. The second domain is the NADPH-binding domain, and the third C-terminal domain is responsible for dimerization.</text>
</comment>
<comment type="miscellaneous">
    <text evidence="1">During catalysis, the active site Cys acts as a nucleophile attacking the alpha-carbonyl group of tRNA-bound glutamate with the formation of a thioester intermediate between enzyme and glutamate, and the concomitant release of tRNA(Glu). The thioester intermediate is finally reduced by direct hydride transfer from NADPH, to form the product GSA.</text>
</comment>
<comment type="similarity">
    <text evidence="1">Belongs to the glutamyl-tRNA reductase family.</text>
</comment>
<accession>A8A9U3</accession>
<proteinExistence type="inferred from homology"/>
<organism>
    <name type="scientific">Ignicoccus hospitalis (strain KIN4/I / DSM 18386 / JCM 14125)</name>
    <dbReference type="NCBI Taxonomy" id="453591"/>
    <lineage>
        <taxon>Archaea</taxon>
        <taxon>Thermoproteota</taxon>
        <taxon>Thermoprotei</taxon>
        <taxon>Desulfurococcales</taxon>
        <taxon>Desulfurococcaceae</taxon>
        <taxon>Ignicoccus</taxon>
    </lineage>
</organism>
<keyword id="KW-0521">NADP</keyword>
<keyword id="KW-0560">Oxidoreductase</keyword>
<keyword id="KW-0627">Porphyrin biosynthesis</keyword>
<keyword id="KW-1185">Reference proteome</keyword>
<feature type="chain" id="PRO_0000335090" description="Glutamyl-tRNA reductase">
    <location>
        <begin position="1"/>
        <end position="441"/>
    </location>
</feature>
<feature type="active site" description="Nucleophile" evidence="1">
    <location>
        <position position="59"/>
    </location>
</feature>
<feature type="binding site" evidence="1">
    <location>
        <begin position="58"/>
        <end position="61"/>
    </location>
    <ligand>
        <name>substrate</name>
    </ligand>
</feature>
<feature type="binding site" evidence="1">
    <location>
        <position position="116"/>
    </location>
    <ligand>
        <name>substrate</name>
    </ligand>
</feature>
<feature type="binding site" evidence="1">
    <location>
        <begin position="121"/>
        <end position="123"/>
    </location>
    <ligand>
        <name>substrate</name>
    </ligand>
</feature>
<feature type="binding site" evidence="1">
    <location>
        <position position="127"/>
    </location>
    <ligand>
        <name>substrate</name>
    </ligand>
</feature>
<feature type="binding site" evidence="1">
    <location>
        <begin position="195"/>
        <end position="200"/>
    </location>
    <ligand>
        <name>NADP(+)</name>
        <dbReference type="ChEBI" id="CHEBI:58349"/>
    </ligand>
</feature>
<feature type="site" description="Important for activity" evidence="1">
    <location>
        <position position="106"/>
    </location>
</feature>
<reference key="1">
    <citation type="journal article" date="2008" name="Genome Biol.">
        <title>A genomic analysis of the archaeal system Ignicoccus hospitalis-Nanoarchaeum equitans.</title>
        <authorList>
            <person name="Podar M."/>
            <person name="Anderson I."/>
            <person name="Makarova K.S."/>
            <person name="Elkins J.G."/>
            <person name="Ivanova N."/>
            <person name="Wall M.A."/>
            <person name="Lykidis A."/>
            <person name="Mavromatis K."/>
            <person name="Sun H."/>
            <person name="Hudson M.E."/>
            <person name="Chen W."/>
            <person name="Deciu C."/>
            <person name="Hutchison D."/>
            <person name="Eads J.R."/>
            <person name="Anderson A."/>
            <person name="Fernandes F."/>
            <person name="Szeto E."/>
            <person name="Lapidus A."/>
            <person name="Kyrpides N.C."/>
            <person name="Saier M.H. Jr."/>
            <person name="Richardson P.M."/>
            <person name="Rachel R."/>
            <person name="Huber H."/>
            <person name="Eisen J.A."/>
            <person name="Koonin E.V."/>
            <person name="Keller M."/>
            <person name="Stetter K.O."/>
        </authorList>
    </citation>
    <scope>NUCLEOTIDE SEQUENCE [LARGE SCALE GENOMIC DNA]</scope>
    <source>
        <strain>KIN4/I / DSM 18386 / JCM 14125</strain>
    </source>
</reference>
<sequence>MPAAARVPLFVDDLVMVGVNYKTSGKELVEKAQFPDPLAAYSAISRIPAVREVVLLQTCNRVEVYAITTNKKATVESIKSLLEARAGEPIPEEKFVIYYGTDAVRHLFRVAAGLESMVLGEPDILRQVREAAEFAAKEGYIGKALKLTFENAVRVGKRVRTETALGKGSIGIPSASVKLLEELIGLEGKKLLVVGAGMAGRVVAVNAAKRGAKVIIVNRTLSKAKELAEEVGGEAYPLEELPRLLREADAVVVAVGGGSKVITRDAVAEVNKKLVIVDISEPPAVDPGVSLNPYVIYKDMLAVAEVANRGLEKRKSEIKRAEDIIEAELNKFVNFAQRVLADKILRELMEKVEQIRINELSKAMAKVPQEYAEVLDKMTSSLVKKVLKDVILKVREAAGKGDLTTLRIVAEVFDLKESLNNIEIIYDYNGVEQELKRKLEL</sequence>
<name>HEM1_IGNH4</name>
<evidence type="ECO:0000255" key="1">
    <source>
        <dbReference type="HAMAP-Rule" id="MF_00087"/>
    </source>
</evidence>
<gene>
    <name evidence="1" type="primary">hemA</name>
    <name type="ordered locus">Igni_0512</name>
</gene>